<reference key="1">
    <citation type="journal article" date="1989" name="Gene">
        <title>Nucleotide sequence analysis of IS256 from the Staphylococcus aureus gentamicin-tobramycin-kanamycin-resistance transposon Tn4001.</title>
        <authorList>
            <person name="Byrne M.E."/>
            <person name="Rouch D.A."/>
            <person name="Skurray R.A."/>
        </authorList>
    </citation>
    <scope>NUCLEOTIDE SEQUENCE [GENOMIC DNA]</scope>
</reference>
<name>TRA6_STAAU</name>
<accession>P19775</accession>
<keyword id="KW-0233">DNA recombination</keyword>
<keyword id="KW-0238">DNA-binding</keyword>
<keyword id="KW-0814">Transposable element</keyword>
<keyword id="KW-0815">Transposition</keyword>
<comment type="function">
    <text>Required for the transposition of the insertion element.</text>
</comment>
<comment type="similarity">
    <text evidence="1">Belongs to the transposase mutator family.</text>
</comment>
<gene>
    <name type="primary">tnp</name>
</gene>
<evidence type="ECO:0000305" key="1"/>
<sequence>MTQVHFTLKSEEIQSIIEYSVKDDVSKNILTTVFNQLMENQRTEYIQAKEYERTENRQSQRNGYYERSFTTRVGTLELKVPRTRDGHFSPTVFERYQRNEKALMASMLEMYVSGVSTRKVSKIVEELCGKSVSKSFVSSLTEQLEPMVNEWQNRLLSEKNYPYLMTDVLYIKVREENRVLSKSCHIAIGITKDGDREIIGFMIQSGESEETWTTFFEYLKERGLQGTELVISDAHKGLVSAIRKSFTNVSWQRCQVHFLRNIFTTIPKKNSKSFREAVKGIFKFTDINLAREAKNRLIHDYIDQPKYSKACASLDDGFEDAFQYTVQGNSHNRLKSTNLIERLNQEVRRREKIIRIFPNQTSANRLIGAVLMDLHDEWIYSSRKYINFDK</sequence>
<organism>
    <name type="scientific">Staphylococcus aureus</name>
    <dbReference type="NCBI Taxonomy" id="1280"/>
    <lineage>
        <taxon>Bacteria</taxon>
        <taxon>Bacillati</taxon>
        <taxon>Bacillota</taxon>
        <taxon>Bacilli</taxon>
        <taxon>Bacillales</taxon>
        <taxon>Staphylococcaceae</taxon>
        <taxon>Staphylococcus</taxon>
    </lineage>
</organism>
<protein>
    <recommendedName>
        <fullName>Transposase for insertion sequence element IS256 in transposon Tn4001</fullName>
    </recommendedName>
</protein>
<proteinExistence type="inferred from homology"/>
<dbReference type="EMBL" id="GU565967">
    <property type="protein sequence ID" value="AAA88546.1"/>
    <property type="molecule type" value="Genomic_DNA"/>
</dbReference>
<dbReference type="PIR" id="JS0296">
    <property type="entry name" value="JS0296"/>
</dbReference>
<dbReference type="RefSeq" id="WP_000195429.1">
    <property type="nucleotide sequence ID" value="NZ_WKIQ01000043.1"/>
</dbReference>
<dbReference type="RefSeq" id="YP_003813124.1">
    <property type="nucleotide sequence ID" value="NC_014369.1"/>
</dbReference>
<dbReference type="RefSeq" id="YP_003813126.1">
    <property type="nucleotide sequence ID" value="NC_014369.1"/>
</dbReference>
<dbReference type="RefSeq" id="YP_006937699.1">
    <property type="nucleotide sequence ID" value="NC_013321.1"/>
</dbReference>
<dbReference type="RefSeq" id="YP_006937702.1">
    <property type="nucleotide sequence ID" value="NC_013321.1"/>
</dbReference>
<dbReference type="RefSeq" id="YP_006937713.1">
    <property type="nucleotide sequence ID" value="NC_013321.1"/>
</dbReference>
<dbReference type="RefSeq" id="YP_008709804.1">
    <property type="nucleotide sequence ID" value="NC_022598.1"/>
</dbReference>
<dbReference type="RefSeq" id="YP_008709807.1">
    <property type="nucleotide sequence ID" value="NC_022598.1"/>
</dbReference>
<dbReference type="SMR" id="P19775"/>
<dbReference type="OMA" id="LLPKWAR"/>
<dbReference type="GO" id="GO:0003677">
    <property type="term" value="F:DNA binding"/>
    <property type="evidence" value="ECO:0007669"/>
    <property type="project" value="UniProtKB-KW"/>
</dbReference>
<dbReference type="GO" id="GO:0004803">
    <property type="term" value="F:transposase activity"/>
    <property type="evidence" value="ECO:0007669"/>
    <property type="project" value="InterPro"/>
</dbReference>
<dbReference type="GO" id="GO:0006313">
    <property type="term" value="P:DNA transposition"/>
    <property type="evidence" value="ECO:0007669"/>
    <property type="project" value="InterPro"/>
</dbReference>
<dbReference type="InterPro" id="IPR001207">
    <property type="entry name" value="Transposase_mutator"/>
</dbReference>
<dbReference type="NCBIfam" id="NF033543">
    <property type="entry name" value="transpos_IS256"/>
    <property type="match status" value="1"/>
</dbReference>
<dbReference type="PANTHER" id="PTHR33217">
    <property type="entry name" value="TRANSPOSASE FOR INSERTION SEQUENCE ELEMENT IS1081"/>
    <property type="match status" value="1"/>
</dbReference>
<dbReference type="PANTHER" id="PTHR33217:SF7">
    <property type="entry name" value="TRANSPOSASE FOR INSERTION SEQUENCE ELEMENT IS1081"/>
    <property type="match status" value="1"/>
</dbReference>
<dbReference type="Pfam" id="PF00872">
    <property type="entry name" value="Transposase_mut"/>
    <property type="match status" value="1"/>
</dbReference>
<dbReference type="PROSITE" id="PS01007">
    <property type="entry name" value="TRANSPOSASE_MUTATOR"/>
    <property type="match status" value="1"/>
</dbReference>
<feature type="chain" id="PRO_0000211355" description="Transposase for insertion sequence element IS256 in transposon Tn4001">
    <location>
        <begin position="1"/>
        <end position="390"/>
    </location>
</feature>